<dbReference type="EC" id="6.3.2.1" evidence="1"/>
<dbReference type="EMBL" id="BA000033">
    <property type="protein sequence ID" value="BAB96382.1"/>
    <property type="molecule type" value="Genomic_DNA"/>
</dbReference>
<dbReference type="RefSeq" id="WP_000163742.1">
    <property type="nucleotide sequence ID" value="NC_003923.1"/>
</dbReference>
<dbReference type="SMR" id="Q8NUN2"/>
<dbReference type="KEGG" id="sam:MW2517"/>
<dbReference type="HOGENOM" id="CLU_047148_0_0_9"/>
<dbReference type="UniPathway" id="UPA00028">
    <property type="reaction ID" value="UER00005"/>
</dbReference>
<dbReference type="GO" id="GO:0005829">
    <property type="term" value="C:cytosol"/>
    <property type="evidence" value="ECO:0007669"/>
    <property type="project" value="TreeGrafter"/>
</dbReference>
<dbReference type="GO" id="GO:0005524">
    <property type="term" value="F:ATP binding"/>
    <property type="evidence" value="ECO:0007669"/>
    <property type="project" value="UniProtKB-KW"/>
</dbReference>
<dbReference type="GO" id="GO:0004592">
    <property type="term" value="F:pantoate-beta-alanine ligase activity"/>
    <property type="evidence" value="ECO:0007669"/>
    <property type="project" value="UniProtKB-UniRule"/>
</dbReference>
<dbReference type="GO" id="GO:0015940">
    <property type="term" value="P:pantothenate biosynthetic process"/>
    <property type="evidence" value="ECO:0007669"/>
    <property type="project" value="UniProtKB-UniRule"/>
</dbReference>
<dbReference type="CDD" id="cd00560">
    <property type="entry name" value="PanC"/>
    <property type="match status" value="1"/>
</dbReference>
<dbReference type="FunFam" id="3.30.1300.10:FF:000001">
    <property type="entry name" value="Pantothenate synthetase"/>
    <property type="match status" value="1"/>
</dbReference>
<dbReference type="FunFam" id="3.40.50.620:FF:000013">
    <property type="entry name" value="Pantothenate synthetase"/>
    <property type="match status" value="1"/>
</dbReference>
<dbReference type="Gene3D" id="3.40.50.620">
    <property type="entry name" value="HUPs"/>
    <property type="match status" value="1"/>
</dbReference>
<dbReference type="Gene3D" id="3.30.1300.10">
    <property type="entry name" value="Pantoate-beta-alanine ligase, C-terminal domain"/>
    <property type="match status" value="1"/>
</dbReference>
<dbReference type="HAMAP" id="MF_00158">
    <property type="entry name" value="PanC"/>
    <property type="match status" value="1"/>
</dbReference>
<dbReference type="InterPro" id="IPR003721">
    <property type="entry name" value="Pantoate_ligase"/>
</dbReference>
<dbReference type="InterPro" id="IPR042176">
    <property type="entry name" value="Pantoate_ligase_C"/>
</dbReference>
<dbReference type="InterPro" id="IPR014729">
    <property type="entry name" value="Rossmann-like_a/b/a_fold"/>
</dbReference>
<dbReference type="NCBIfam" id="TIGR00018">
    <property type="entry name" value="panC"/>
    <property type="match status" value="1"/>
</dbReference>
<dbReference type="PANTHER" id="PTHR21299">
    <property type="entry name" value="CYTIDYLATE KINASE/PANTOATE-BETA-ALANINE LIGASE"/>
    <property type="match status" value="1"/>
</dbReference>
<dbReference type="PANTHER" id="PTHR21299:SF1">
    <property type="entry name" value="PANTOATE--BETA-ALANINE LIGASE"/>
    <property type="match status" value="1"/>
</dbReference>
<dbReference type="Pfam" id="PF02569">
    <property type="entry name" value="Pantoate_ligase"/>
    <property type="match status" value="1"/>
</dbReference>
<dbReference type="SUPFAM" id="SSF52374">
    <property type="entry name" value="Nucleotidylyl transferase"/>
    <property type="match status" value="1"/>
</dbReference>
<gene>
    <name evidence="1" type="primary">panC</name>
    <name type="ordered locus">MW2517</name>
</gene>
<name>PANC_STAAW</name>
<feature type="chain" id="PRO_0000128273" description="Pantothenate synthetase">
    <location>
        <begin position="1"/>
        <end position="283"/>
    </location>
</feature>
<feature type="active site" description="Proton donor" evidence="1">
    <location>
        <position position="38"/>
    </location>
</feature>
<feature type="binding site" evidence="1">
    <location>
        <begin position="31"/>
        <end position="38"/>
    </location>
    <ligand>
        <name>ATP</name>
        <dbReference type="ChEBI" id="CHEBI:30616"/>
    </ligand>
</feature>
<feature type="binding site" evidence="1">
    <location>
        <position position="62"/>
    </location>
    <ligand>
        <name>(R)-pantoate</name>
        <dbReference type="ChEBI" id="CHEBI:15980"/>
    </ligand>
</feature>
<feature type="binding site" evidence="1">
    <location>
        <position position="62"/>
    </location>
    <ligand>
        <name>beta-alanine</name>
        <dbReference type="ChEBI" id="CHEBI:57966"/>
    </ligand>
</feature>
<feature type="binding site" evidence="1">
    <location>
        <begin position="148"/>
        <end position="151"/>
    </location>
    <ligand>
        <name>ATP</name>
        <dbReference type="ChEBI" id="CHEBI:30616"/>
    </ligand>
</feature>
<feature type="binding site" evidence="1">
    <location>
        <position position="154"/>
    </location>
    <ligand>
        <name>(R)-pantoate</name>
        <dbReference type="ChEBI" id="CHEBI:15980"/>
    </ligand>
</feature>
<feature type="binding site" evidence="1">
    <location>
        <position position="177"/>
    </location>
    <ligand>
        <name>ATP</name>
        <dbReference type="ChEBI" id="CHEBI:30616"/>
    </ligand>
</feature>
<feature type="binding site" evidence="1">
    <location>
        <begin position="185"/>
        <end position="188"/>
    </location>
    <ligand>
        <name>ATP</name>
        <dbReference type="ChEBI" id="CHEBI:30616"/>
    </ligand>
</feature>
<keyword id="KW-0067">ATP-binding</keyword>
<keyword id="KW-0963">Cytoplasm</keyword>
<keyword id="KW-0436">Ligase</keyword>
<keyword id="KW-0547">Nucleotide-binding</keyword>
<keyword id="KW-0566">Pantothenate biosynthesis</keyword>
<evidence type="ECO:0000255" key="1">
    <source>
        <dbReference type="HAMAP-Rule" id="MF_00158"/>
    </source>
</evidence>
<organism>
    <name type="scientific">Staphylococcus aureus (strain MW2)</name>
    <dbReference type="NCBI Taxonomy" id="196620"/>
    <lineage>
        <taxon>Bacteria</taxon>
        <taxon>Bacillati</taxon>
        <taxon>Bacillota</taxon>
        <taxon>Bacilli</taxon>
        <taxon>Bacillales</taxon>
        <taxon>Staphylococcaceae</taxon>
        <taxon>Staphylococcus</taxon>
    </lineage>
</organism>
<comment type="function">
    <text evidence="1">Catalyzes the condensation of pantoate with beta-alanine in an ATP-dependent reaction via a pantoyl-adenylate intermediate.</text>
</comment>
<comment type="catalytic activity">
    <reaction evidence="1">
        <text>(R)-pantoate + beta-alanine + ATP = (R)-pantothenate + AMP + diphosphate + H(+)</text>
        <dbReference type="Rhea" id="RHEA:10912"/>
        <dbReference type="ChEBI" id="CHEBI:15378"/>
        <dbReference type="ChEBI" id="CHEBI:15980"/>
        <dbReference type="ChEBI" id="CHEBI:29032"/>
        <dbReference type="ChEBI" id="CHEBI:30616"/>
        <dbReference type="ChEBI" id="CHEBI:33019"/>
        <dbReference type="ChEBI" id="CHEBI:57966"/>
        <dbReference type="ChEBI" id="CHEBI:456215"/>
        <dbReference type="EC" id="6.3.2.1"/>
    </reaction>
</comment>
<comment type="pathway">
    <text evidence="1">Cofactor biosynthesis; (R)-pantothenate biosynthesis; (R)-pantothenate from (R)-pantoate and beta-alanine: step 1/1.</text>
</comment>
<comment type="subunit">
    <text evidence="1">Homodimer.</text>
</comment>
<comment type="subcellular location">
    <subcellularLocation>
        <location evidence="1">Cytoplasm</location>
    </subcellularLocation>
</comment>
<comment type="miscellaneous">
    <text evidence="1">The reaction proceeds by a bi uni uni bi ping pong mechanism.</text>
</comment>
<comment type="similarity">
    <text evidence="1">Belongs to the pantothenate synthetase family.</text>
</comment>
<protein>
    <recommendedName>
        <fullName evidence="1">Pantothenate synthetase</fullName>
        <shortName evidence="1">PS</shortName>
        <ecNumber evidence="1">6.3.2.1</ecNumber>
    </recommendedName>
    <alternativeName>
        <fullName evidence="1">Pantoate--beta-alanine ligase</fullName>
    </alternativeName>
    <alternativeName>
        <fullName evidence="1">Pantoate-activating enzyme</fullName>
    </alternativeName>
</protein>
<proteinExistence type="inferred from homology"/>
<accession>Q8NUN2</accession>
<sequence length="283" mass="31448">MTKLITTVKEMQHIVKAAKRSGTTIGFIPTMGALHDGHLTMVRESVSTNDITVVSVFVNPLQFGPNEDFDAYPRQIDKDLELVSEVGADIVFHPAVEDMYPGELGIDVKVGPLADVLEGAKRPGHFDGVVTVVNKLFNIVMPDYAYFGKKDAQQLAIVEQMVKDFNHAVEIIGIDIVREADGLAKSSRNVYLTEQERQEAVHLSKSLLLAQALYQDGERQSKVIIDRVTEYLESHISGRIEEVAVYSYPQLVEQHEITGRIFISLAVKFSKARLIDNIIIGAE</sequence>
<reference key="1">
    <citation type="journal article" date="2002" name="Lancet">
        <title>Genome and virulence determinants of high virulence community-acquired MRSA.</title>
        <authorList>
            <person name="Baba T."/>
            <person name="Takeuchi F."/>
            <person name="Kuroda M."/>
            <person name="Yuzawa H."/>
            <person name="Aoki K."/>
            <person name="Oguchi A."/>
            <person name="Nagai Y."/>
            <person name="Iwama N."/>
            <person name="Asano K."/>
            <person name="Naimi T."/>
            <person name="Kuroda H."/>
            <person name="Cui L."/>
            <person name="Yamamoto K."/>
            <person name="Hiramatsu K."/>
        </authorList>
    </citation>
    <scope>NUCLEOTIDE SEQUENCE [LARGE SCALE GENOMIC DNA]</scope>
    <source>
        <strain>MW2</strain>
    </source>
</reference>